<proteinExistence type="inferred from homology"/>
<protein>
    <recommendedName>
        <fullName evidence="1">UDP-4-amino-4-deoxy-L-arabinose--oxoglutarate aminotransferase</fullName>
        <ecNumber evidence="1">2.6.1.87</ecNumber>
    </recommendedName>
    <alternativeName>
        <fullName evidence="1">UDP-(beta-L-threo-pentapyranosyl-4''-ulose diphosphate) aminotransferase</fullName>
        <shortName evidence="1">UDP-Ara4O aminotransferase</shortName>
    </alternativeName>
    <alternativeName>
        <fullName evidence="1">UDP-4-amino-4-deoxy-L-arabinose aminotransferase</fullName>
    </alternativeName>
</protein>
<dbReference type="EC" id="2.6.1.87" evidence="1"/>
<dbReference type="EMBL" id="CU928164">
    <property type="protein sequence ID" value="CAR18526.1"/>
    <property type="status" value="ALT_INIT"/>
    <property type="molecule type" value="Genomic_DNA"/>
</dbReference>
<dbReference type="RefSeq" id="WP_024188371.1">
    <property type="nucleotide sequence ID" value="NC_011750.1"/>
</dbReference>
<dbReference type="RefSeq" id="YP_002408356.1">
    <property type="nucleotide sequence ID" value="NC_011750.1"/>
</dbReference>
<dbReference type="SMR" id="B7NNT2"/>
<dbReference type="STRING" id="585057.ECIAI39_2400"/>
<dbReference type="KEGG" id="ect:ECIAI39_2400"/>
<dbReference type="PATRIC" id="fig|585057.6.peg.2502"/>
<dbReference type="HOGENOM" id="CLU_033332_0_3_6"/>
<dbReference type="UniPathway" id="UPA00030"/>
<dbReference type="UniPathway" id="UPA00032">
    <property type="reaction ID" value="UER00493"/>
</dbReference>
<dbReference type="Proteomes" id="UP000000749">
    <property type="component" value="Chromosome"/>
</dbReference>
<dbReference type="GO" id="GO:0016020">
    <property type="term" value="C:membrane"/>
    <property type="evidence" value="ECO:0007669"/>
    <property type="project" value="GOC"/>
</dbReference>
<dbReference type="GO" id="GO:0030170">
    <property type="term" value="F:pyridoxal phosphate binding"/>
    <property type="evidence" value="ECO:0007669"/>
    <property type="project" value="TreeGrafter"/>
</dbReference>
<dbReference type="GO" id="GO:0099620">
    <property type="term" value="F:UDP-4-amino-4-deoxy-L-arabinose aminotransferase"/>
    <property type="evidence" value="ECO:0007669"/>
    <property type="project" value="UniProtKB-EC"/>
</dbReference>
<dbReference type="GO" id="GO:0009245">
    <property type="term" value="P:lipid A biosynthetic process"/>
    <property type="evidence" value="ECO:0007669"/>
    <property type="project" value="UniProtKB-KW"/>
</dbReference>
<dbReference type="GO" id="GO:0009103">
    <property type="term" value="P:lipopolysaccharide biosynthetic process"/>
    <property type="evidence" value="ECO:0007669"/>
    <property type="project" value="UniProtKB-UniRule"/>
</dbReference>
<dbReference type="GO" id="GO:0046677">
    <property type="term" value="P:response to antibiotic"/>
    <property type="evidence" value="ECO:0007669"/>
    <property type="project" value="UniProtKB-KW"/>
</dbReference>
<dbReference type="CDD" id="cd00616">
    <property type="entry name" value="AHBA_syn"/>
    <property type="match status" value="1"/>
</dbReference>
<dbReference type="FunFam" id="3.40.640.10:FF:000040">
    <property type="entry name" value="UDP-4-amino-4-deoxy-L-arabinose--oxoglutarate aminotransferase"/>
    <property type="match status" value="1"/>
</dbReference>
<dbReference type="FunFam" id="3.90.1150.10:FF:000030">
    <property type="entry name" value="UDP-4-amino-4-deoxy-L-arabinose--oxoglutarate aminotransferase"/>
    <property type="match status" value="1"/>
</dbReference>
<dbReference type="Gene3D" id="3.90.1150.10">
    <property type="entry name" value="Aspartate Aminotransferase, domain 1"/>
    <property type="match status" value="1"/>
</dbReference>
<dbReference type="Gene3D" id="3.40.640.10">
    <property type="entry name" value="Type I PLP-dependent aspartate aminotransferase-like (Major domain)"/>
    <property type="match status" value="1"/>
</dbReference>
<dbReference type="HAMAP" id="MF_01167">
    <property type="entry name" value="ArnB_transfer"/>
    <property type="match status" value="1"/>
</dbReference>
<dbReference type="InterPro" id="IPR022850">
    <property type="entry name" value="ArnB_NH2Trfase"/>
</dbReference>
<dbReference type="InterPro" id="IPR000653">
    <property type="entry name" value="DegT/StrS_aminotransferase"/>
</dbReference>
<dbReference type="InterPro" id="IPR015424">
    <property type="entry name" value="PyrdxlP-dep_Trfase"/>
</dbReference>
<dbReference type="InterPro" id="IPR015421">
    <property type="entry name" value="PyrdxlP-dep_Trfase_major"/>
</dbReference>
<dbReference type="InterPro" id="IPR015422">
    <property type="entry name" value="PyrdxlP-dep_Trfase_small"/>
</dbReference>
<dbReference type="NCBIfam" id="NF008658">
    <property type="entry name" value="PRK11658.1"/>
    <property type="match status" value="1"/>
</dbReference>
<dbReference type="PANTHER" id="PTHR30244">
    <property type="entry name" value="TRANSAMINASE"/>
    <property type="match status" value="1"/>
</dbReference>
<dbReference type="PANTHER" id="PTHR30244:SF41">
    <property type="entry name" value="UDP-4-AMINO-4-DEOXY-L-ARABINOSE--OXOGLUTARATE AMINOTRANSFERASE"/>
    <property type="match status" value="1"/>
</dbReference>
<dbReference type="Pfam" id="PF01041">
    <property type="entry name" value="DegT_DnrJ_EryC1"/>
    <property type="match status" value="1"/>
</dbReference>
<dbReference type="PIRSF" id="PIRSF000390">
    <property type="entry name" value="PLP_StrS"/>
    <property type="match status" value="1"/>
</dbReference>
<dbReference type="SUPFAM" id="SSF53383">
    <property type="entry name" value="PLP-dependent transferases"/>
    <property type="match status" value="1"/>
</dbReference>
<gene>
    <name evidence="1" type="primary">arnB</name>
    <name type="ordered locus">ECIAI39_2400</name>
</gene>
<accession>B7NNT2</accession>
<sequence length="379" mass="41598">MSEFLPFSRPAMGVEELAAVKEVLESGWITTGPKNQALEQAFCQLTGNQHAIAVSSATAGMHITLMALEIGKGDEVITPSLTWVSTLNMISLLGATPVMVDVDRDTLMVTPEAIESAITPRTKAIIPVHYAGAPADIDAIRAIGERYGIAVIEDAAHAVGTYYKGRHIGAKGTAIFSFHAIKNITCAEGGLIVTDNENLARQLRMLKFHGLGVDAYDRQTWGRAPQAEVLTPGYKYNLTDINAAIALTQLAKLEHLNTRRREIAQQYQQALAALPFQPLSLPAWPHVHAWHLFIIRVDEQRCGISRDALMEALKERGIGTGLHFRAAHTQKYYRERCPTLSLPNTEWNSERICSLPLFPDMTTADADRVITALQQLAGQ</sequence>
<organism>
    <name type="scientific">Escherichia coli O7:K1 (strain IAI39 / ExPEC)</name>
    <dbReference type="NCBI Taxonomy" id="585057"/>
    <lineage>
        <taxon>Bacteria</taxon>
        <taxon>Pseudomonadati</taxon>
        <taxon>Pseudomonadota</taxon>
        <taxon>Gammaproteobacteria</taxon>
        <taxon>Enterobacterales</taxon>
        <taxon>Enterobacteriaceae</taxon>
        <taxon>Escherichia</taxon>
    </lineage>
</organism>
<evidence type="ECO:0000255" key="1">
    <source>
        <dbReference type="HAMAP-Rule" id="MF_01167"/>
    </source>
</evidence>
<evidence type="ECO:0000305" key="2"/>
<keyword id="KW-0032">Aminotransferase</keyword>
<keyword id="KW-0046">Antibiotic resistance</keyword>
<keyword id="KW-0441">Lipid A biosynthesis</keyword>
<keyword id="KW-0444">Lipid biosynthesis</keyword>
<keyword id="KW-0443">Lipid metabolism</keyword>
<keyword id="KW-0448">Lipopolysaccharide biosynthesis</keyword>
<keyword id="KW-0663">Pyridoxal phosphate</keyword>
<keyword id="KW-0808">Transferase</keyword>
<feature type="chain" id="PRO_0000380526" description="UDP-4-amino-4-deoxy-L-arabinose--oxoglutarate aminotransferase">
    <location>
        <begin position="1"/>
        <end position="379"/>
    </location>
</feature>
<feature type="modified residue" description="N6-(pyridoxal phosphate)lysine" evidence="1">
    <location>
        <position position="182"/>
    </location>
</feature>
<name>ARNB_ECO7I</name>
<comment type="function">
    <text evidence="1">Catalyzes the conversion of UDP-4-keto-arabinose (UDP-Ara4O) to UDP-4-amino-4-deoxy-L-arabinose (UDP-L-Ara4N). The modified arabinose is attached to lipid A and is required for resistance to polymyxin and cationic antimicrobial peptides.</text>
</comment>
<comment type="catalytic activity">
    <reaction evidence="1">
        <text>UDP-4-amino-4-deoxy-beta-L-arabinose + 2-oxoglutarate = UDP-beta-L-threo-pentopyranos-4-ulose + L-glutamate</text>
        <dbReference type="Rhea" id="RHEA:24710"/>
        <dbReference type="ChEBI" id="CHEBI:16810"/>
        <dbReference type="ChEBI" id="CHEBI:29985"/>
        <dbReference type="ChEBI" id="CHEBI:58708"/>
        <dbReference type="ChEBI" id="CHEBI:58710"/>
        <dbReference type="EC" id="2.6.1.87"/>
    </reaction>
</comment>
<comment type="cofactor">
    <cofactor evidence="1">
        <name>pyridoxal 5'-phosphate</name>
        <dbReference type="ChEBI" id="CHEBI:597326"/>
    </cofactor>
</comment>
<comment type="pathway">
    <text evidence="1">Nucleotide-sugar biosynthesis; UDP-4-deoxy-4-formamido-beta-L-arabinose biosynthesis; UDP-4-deoxy-4-formamido-beta-L-arabinose from UDP-alpha-D-glucuronate: step 2/3.</text>
</comment>
<comment type="pathway">
    <text evidence="1">Bacterial outer membrane biogenesis; lipopolysaccharide biosynthesis.</text>
</comment>
<comment type="subunit">
    <text evidence="1">Homodimer.</text>
</comment>
<comment type="similarity">
    <text evidence="1">Belongs to the DegT/DnrJ/EryC1 family. ArnB subfamily.</text>
</comment>
<comment type="sequence caution" evidence="2">
    <conflict type="erroneous initiation">
        <sequence resource="EMBL-CDS" id="CAR18526"/>
    </conflict>
</comment>
<reference key="1">
    <citation type="journal article" date="2009" name="PLoS Genet.">
        <title>Organised genome dynamics in the Escherichia coli species results in highly diverse adaptive paths.</title>
        <authorList>
            <person name="Touchon M."/>
            <person name="Hoede C."/>
            <person name="Tenaillon O."/>
            <person name="Barbe V."/>
            <person name="Baeriswyl S."/>
            <person name="Bidet P."/>
            <person name="Bingen E."/>
            <person name="Bonacorsi S."/>
            <person name="Bouchier C."/>
            <person name="Bouvet O."/>
            <person name="Calteau A."/>
            <person name="Chiapello H."/>
            <person name="Clermont O."/>
            <person name="Cruveiller S."/>
            <person name="Danchin A."/>
            <person name="Diard M."/>
            <person name="Dossat C."/>
            <person name="Karoui M.E."/>
            <person name="Frapy E."/>
            <person name="Garry L."/>
            <person name="Ghigo J.M."/>
            <person name="Gilles A.M."/>
            <person name="Johnson J."/>
            <person name="Le Bouguenec C."/>
            <person name="Lescat M."/>
            <person name="Mangenot S."/>
            <person name="Martinez-Jehanne V."/>
            <person name="Matic I."/>
            <person name="Nassif X."/>
            <person name="Oztas S."/>
            <person name="Petit M.A."/>
            <person name="Pichon C."/>
            <person name="Rouy Z."/>
            <person name="Ruf C.S."/>
            <person name="Schneider D."/>
            <person name="Tourret J."/>
            <person name="Vacherie B."/>
            <person name="Vallenet D."/>
            <person name="Medigue C."/>
            <person name="Rocha E.P.C."/>
            <person name="Denamur E."/>
        </authorList>
    </citation>
    <scope>NUCLEOTIDE SEQUENCE [LARGE SCALE GENOMIC DNA]</scope>
    <source>
        <strain>IAI39 / ExPEC</strain>
    </source>
</reference>